<sequence length="129" mass="14963">MSEMTKTPTHYRLLSTLKAMGPYLREGQCSERFYLFDCLASCVNDKKSPEKREFWGWWMELTQNEQEMSACYHIGRYTLAGDWVAEAIPESAQAEVNHTQAEFHKKLVKTLRERFEISVTVSTESAPFA</sequence>
<gene>
    <name evidence="1" type="primary">crl</name>
    <name type="ordered locus">VC_2275</name>
</gene>
<name>CRL_VIBCH</name>
<keyword id="KW-0010">Activator</keyword>
<keyword id="KW-0963">Cytoplasm</keyword>
<keyword id="KW-1185">Reference proteome</keyword>
<keyword id="KW-0804">Transcription</keyword>
<keyword id="KW-0805">Transcription regulation</keyword>
<comment type="function">
    <text evidence="1">Binds to the sigma-S subunit of RNA polymerase, activating expression of sigma-S-regulated genes. Stimulates RNA polymerase holoenzyme formation and may bind to several other sigma factors, such as sigma-70 and sigma-32.</text>
</comment>
<comment type="subcellular location">
    <subcellularLocation>
        <location evidence="1">Cytoplasm</location>
    </subcellularLocation>
</comment>
<comment type="similarity">
    <text evidence="1">Belongs to the Crl family.</text>
</comment>
<protein>
    <recommendedName>
        <fullName evidence="1">Sigma factor-binding protein Crl</fullName>
    </recommendedName>
</protein>
<proteinExistence type="inferred from homology"/>
<dbReference type="EMBL" id="AE003852">
    <property type="protein sequence ID" value="AAF95419.1"/>
    <property type="molecule type" value="Genomic_DNA"/>
</dbReference>
<dbReference type="PIR" id="G82095">
    <property type="entry name" value="G82095"/>
</dbReference>
<dbReference type="RefSeq" id="NP_231906.1">
    <property type="nucleotide sequence ID" value="NC_002505.1"/>
</dbReference>
<dbReference type="RefSeq" id="WP_001293331.1">
    <property type="nucleotide sequence ID" value="NZ_LT906614.1"/>
</dbReference>
<dbReference type="SMR" id="Q9KPT7"/>
<dbReference type="STRING" id="243277.VC_2275"/>
<dbReference type="DNASU" id="2613197"/>
<dbReference type="EnsemblBacteria" id="AAF95419">
    <property type="protein sequence ID" value="AAF95419"/>
    <property type="gene ID" value="VC_2275"/>
</dbReference>
<dbReference type="GeneID" id="69719101"/>
<dbReference type="KEGG" id="vch:VC_2275"/>
<dbReference type="PATRIC" id="fig|243277.26.peg.2170"/>
<dbReference type="eggNOG" id="ENOG502ZQ8E">
    <property type="taxonomic scope" value="Bacteria"/>
</dbReference>
<dbReference type="HOGENOM" id="CLU_136773_1_0_6"/>
<dbReference type="Proteomes" id="UP000000584">
    <property type="component" value="Chromosome 1"/>
</dbReference>
<dbReference type="GO" id="GO:0005737">
    <property type="term" value="C:cytoplasm"/>
    <property type="evidence" value="ECO:0007669"/>
    <property type="project" value="UniProtKB-SubCell"/>
</dbReference>
<dbReference type="GO" id="GO:0045893">
    <property type="term" value="P:positive regulation of DNA-templated transcription"/>
    <property type="evidence" value="ECO:0007669"/>
    <property type="project" value="UniProtKB-UniRule"/>
</dbReference>
<dbReference type="Gene3D" id="3.30.310.230">
    <property type="entry name" value="Sigma factor-binding protein Crl monomer"/>
    <property type="match status" value="1"/>
</dbReference>
<dbReference type="HAMAP" id="MF_01178">
    <property type="entry name" value="Crl"/>
    <property type="match status" value="1"/>
</dbReference>
<dbReference type="InterPro" id="IPR009986">
    <property type="entry name" value="Tscrpt_reg_Crl"/>
</dbReference>
<dbReference type="InterPro" id="IPR038208">
    <property type="entry name" value="Tscrpt_reg_Crl_sf"/>
</dbReference>
<dbReference type="NCBIfam" id="NF008217">
    <property type="entry name" value="PRK10984.1"/>
    <property type="match status" value="1"/>
</dbReference>
<dbReference type="Pfam" id="PF07417">
    <property type="entry name" value="Crl"/>
    <property type="match status" value="1"/>
</dbReference>
<organism>
    <name type="scientific">Vibrio cholerae serotype O1 (strain ATCC 39315 / El Tor Inaba N16961)</name>
    <dbReference type="NCBI Taxonomy" id="243277"/>
    <lineage>
        <taxon>Bacteria</taxon>
        <taxon>Pseudomonadati</taxon>
        <taxon>Pseudomonadota</taxon>
        <taxon>Gammaproteobacteria</taxon>
        <taxon>Vibrionales</taxon>
        <taxon>Vibrionaceae</taxon>
        <taxon>Vibrio</taxon>
    </lineage>
</organism>
<evidence type="ECO:0000255" key="1">
    <source>
        <dbReference type="HAMAP-Rule" id="MF_01178"/>
    </source>
</evidence>
<accession>Q9KPT7</accession>
<feature type="chain" id="PRO_0000268909" description="Sigma factor-binding protein Crl">
    <location>
        <begin position="1"/>
        <end position="129"/>
    </location>
</feature>
<feature type="region of interest" description="Essential for activity" evidence="1">
    <location>
        <begin position="99"/>
        <end position="119"/>
    </location>
</feature>
<reference key="1">
    <citation type="journal article" date="2000" name="Nature">
        <title>DNA sequence of both chromosomes of the cholera pathogen Vibrio cholerae.</title>
        <authorList>
            <person name="Heidelberg J.F."/>
            <person name="Eisen J.A."/>
            <person name="Nelson W.C."/>
            <person name="Clayton R.A."/>
            <person name="Gwinn M.L."/>
            <person name="Dodson R.J."/>
            <person name="Haft D.H."/>
            <person name="Hickey E.K."/>
            <person name="Peterson J.D."/>
            <person name="Umayam L.A."/>
            <person name="Gill S.R."/>
            <person name="Nelson K.E."/>
            <person name="Read T.D."/>
            <person name="Tettelin H."/>
            <person name="Richardson D.L."/>
            <person name="Ermolaeva M.D."/>
            <person name="Vamathevan J.J."/>
            <person name="Bass S."/>
            <person name="Qin H."/>
            <person name="Dragoi I."/>
            <person name="Sellers P."/>
            <person name="McDonald L.A."/>
            <person name="Utterback T.R."/>
            <person name="Fleischmann R.D."/>
            <person name="Nierman W.C."/>
            <person name="White O."/>
            <person name="Salzberg S.L."/>
            <person name="Smith H.O."/>
            <person name="Colwell R.R."/>
            <person name="Mekalanos J.J."/>
            <person name="Venter J.C."/>
            <person name="Fraser C.M."/>
        </authorList>
    </citation>
    <scope>NUCLEOTIDE SEQUENCE [LARGE SCALE GENOMIC DNA]</scope>
    <source>
        <strain>ATCC 39315 / El Tor Inaba N16961</strain>
    </source>
</reference>